<organism>
    <name type="scientific">Schizosaccharomyces pombe (strain 972 / ATCC 24843)</name>
    <name type="common">Fission yeast</name>
    <dbReference type="NCBI Taxonomy" id="284812"/>
    <lineage>
        <taxon>Eukaryota</taxon>
        <taxon>Fungi</taxon>
        <taxon>Dikarya</taxon>
        <taxon>Ascomycota</taxon>
        <taxon>Taphrinomycotina</taxon>
        <taxon>Schizosaccharomycetes</taxon>
        <taxon>Schizosaccharomycetales</taxon>
        <taxon>Schizosaccharomycetaceae</taxon>
        <taxon>Schizosaccharomyces</taxon>
    </lineage>
</organism>
<keyword id="KW-0469">Meiosis</keyword>
<keyword id="KW-0539">Nucleus</keyword>
<keyword id="KW-1185">Reference proteome</keyword>
<reference key="1">
    <citation type="journal article" date="2002" name="Nature">
        <title>The genome sequence of Schizosaccharomyces pombe.</title>
        <authorList>
            <person name="Wood V."/>
            <person name="Gwilliam R."/>
            <person name="Rajandream M.A."/>
            <person name="Lyne M.H."/>
            <person name="Lyne R."/>
            <person name="Stewart A."/>
            <person name="Sgouros J.G."/>
            <person name="Peat N."/>
            <person name="Hayles J."/>
            <person name="Baker S.G."/>
            <person name="Basham D."/>
            <person name="Bowman S."/>
            <person name="Brooks K."/>
            <person name="Brown D."/>
            <person name="Brown S."/>
            <person name="Chillingworth T."/>
            <person name="Churcher C.M."/>
            <person name="Collins M."/>
            <person name="Connor R."/>
            <person name="Cronin A."/>
            <person name="Davis P."/>
            <person name="Feltwell T."/>
            <person name="Fraser A."/>
            <person name="Gentles S."/>
            <person name="Goble A."/>
            <person name="Hamlin N."/>
            <person name="Harris D.E."/>
            <person name="Hidalgo J."/>
            <person name="Hodgson G."/>
            <person name="Holroyd S."/>
            <person name="Hornsby T."/>
            <person name="Howarth S."/>
            <person name="Huckle E.J."/>
            <person name="Hunt S."/>
            <person name="Jagels K."/>
            <person name="James K.D."/>
            <person name="Jones L."/>
            <person name="Jones M."/>
            <person name="Leather S."/>
            <person name="McDonald S."/>
            <person name="McLean J."/>
            <person name="Mooney P."/>
            <person name="Moule S."/>
            <person name="Mungall K.L."/>
            <person name="Murphy L.D."/>
            <person name="Niblett D."/>
            <person name="Odell C."/>
            <person name="Oliver K."/>
            <person name="O'Neil S."/>
            <person name="Pearson D."/>
            <person name="Quail M.A."/>
            <person name="Rabbinowitsch E."/>
            <person name="Rutherford K.M."/>
            <person name="Rutter S."/>
            <person name="Saunders D."/>
            <person name="Seeger K."/>
            <person name="Sharp S."/>
            <person name="Skelton J."/>
            <person name="Simmonds M.N."/>
            <person name="Squares R."/>
            <person name="Squares S."/>
            <person name="Stevens K."/>
            <person name="Taylor K."/>
            <person name="Taylor R.G."/>
            <person name="Tivey A."/>
            <person name="Walsh S.V."/>
            <person name="Warren T."/>
            <person name="Whitehead S."/>
            <person name="Woodward J.R."/>
            <person name="Volckaert G."/>
            <person name="Aert R."/>
            <person name="Robben J."/>
            <person name="Grymonprez B."/>
            <person name="Weltjens I."/>
            <person name="Vanstreels E."/>
            <person name="Rieger M."/>
            <person name="Schaefer M."/>
            <person name="Mueller-Auer S."/>
            <person name="Gabel C."/>
            <person name="Fuchs M."/>
            <person name="Duesterhoeft A."/>
            <person name="Fritzc C."/>
            <person name="Holzer E."/>
            <person name="Moestl D."/>
            <person name="Hilbert H."/>
            <person name="Borzym K."/>
            <person name="Langer I."/>
            <person name="Beck A."/>
            <person name="Lehrach H."/>
            <person name="Reinhardt R."/>
            <person name="Pohl T.M."/>
            <person name="Eger P."/>
            <person name="Zimmermann W."/>
            <person name="Wedler H."/>
            <person name="Wambutt R."/>
            <person name="Purnelle B."/>
            <person name="Goffeau A."/>
            <person name="Cadieu E."/>
            <person name="Dreano S."/>
            <person name="Gloux S."/>
            <person name="Lelaure V."/>
            <person name="Mottier S."/>
            <person name="Galibert F."/>
            <person name="Aves S.J."/>
            <person name="Xiang Z."/>
            <person name="Hunt C."/>
            <person name="Moore K."/>
            <person name="Hurst S.M."/>
            <person name="Lucas M."/>
            <person name="Rochet M."/>
            <person name="Gaillardin C."/>
            <person name="Tallada V.A."/>
            <person name="Garzon A."/>
            <person name="Thode G."/>
            <person name="Daga R.R."/>
            <person name="Cruzado L."/>
            <person name="Jimenez J."/>
            <person name="Sanchez M."/>
            <person name="del Rey F."/>
            <person name="Benito J."/>
            <person name="Dominguez A."/>
            <person name="Revuelta J.L."/>
            <person name="Moreno S."/>
            <person name="Armstrong J."/>
            <person name="Forsburg S.L."/>
            <person name="Cerutti L."/>
            <person name="Lowe T."/>
            <person name="McCombie W.R."/>
            <person name="Paulsen I."/>
            <person name="Potashkin J."/>
            <person name="Shpakovski G.V."/>
            <person name="Ussery D."/>
            <person name="Barrell B.G."/>
            <person name="Nurse P."/>
        </authorList>
    </citation>
    <scope>NUCLEOTIDE SEQUENCE [LARGE SCALE GENOMIC DNA]</scope>
    <source>
        <strain>972 / ATCC 24843</strain>
    </source>
</reference>
<reference key="2">
    <citation type="journal article" date="2005" name="Curr. Biol.">
        <title>A large-scale screen in S. pombe identifies seven novel genes required for critical meiotic events.</title>
        <authorList>
            <person name="Martin-Castellanos C."/>
            <person name="Blanco M."/>
            <person name="Rozalen A.E."/>
            <person name="Perez-Hidalgo L."/>
            <person name="Garcia A.I."/>
            <person name="Conde F."/>
            <person name="Mata J."/>
            <person name="Ellermeier C."/>
            <person name="Davis L."/>
            <person name="San-Segundo P."/>
            <person name="Smith G.R."/>
            <person name="Moreno S."/>
        </authorList>
    </citation>
    <scope>FUNCTION IN MEIOSIS</scope>
</reference>
<reference key="3">
    <citation type="journal article" date="2006" name="Nat. Biotechnol.">
        <title>ORFeome cloning and global analysis of protein localization in the fission yeast Schizosaccharomyces pombe.</title>
        <authorList>
            <person name="Matsuyama A."/>
            <person name="Arai R."/>
            <person name="Yashiroda Y."/>
            <person name="Shirai A."/>
            <person name="Kamata A."/>
            <person name="Sekido S."/>
            <person name="Kobayashi Y."/>
            <person name="Hashimoto A."/>
            <person name="Hamamoto M."/>
            <person name="Hiraoka Y."/>
            <person name="Horinouchi S."/>
            <person name="Yoshida M."/>
        </authorList>
    </citation>
    <scope>SUBCELLULAR LOCATION [LARGE SCALE ANALYSIS]</scope>
</reference>
<comment type="function">
    <text evidence="1">Has a role in meiosis.</text>
</comment>
<comment type="subcellular location">
    <subcellularLocation>
        <location evidence="2">Nucleus</location>
        <location evidence="2">Nucleolus</location>
    </subcellularLocation>
</comment>
<gene>
    <name type="primary">mug103</name>
    <name type="ORF">SPAC22A12.02c</name>
</gene>
<proteinExistence type="evidence at protein level"/>
<protein>
    <recommendedName>
        <fullName>Meiotically up-regulated gene 103 protein</fullName>
    </recommendedName>
</protein>
<dbReference type="EMBL" id="CU329670">
    <property type="protein sequence ID" value="CAB16572.1"/>
    <property type="molecule type" value="Genomic_DNA"/>
</dbReference>
<dbReference type="PIR" id="T38142">
    <property type="entry name" value="T38142"/>
</dbReference>
<dbReference type="RefSeq" id="NP_593232.1">
    <property type="nucleotide sequence ID" value="NM_001018629.1"/>
</dbReference>
<dbReference type="BioGRID" id="278012">
    <property type="interactions" value="3"/>
</dbReference>
<dbReference type="STRING" id="284812.O13894"/>
<dbReference type="PaxDb" id="4896-SPAC22A12.02c.1"/>
<dbReference type="EnsemblFungi" id="SPAC22A12.02c.1">
    <property type="protein sequence ID" value="SPAC22A12.02c.1:pep"/>
    <property type="gene ID" value="SPAC22A12.02c"/>
</dbReference>
<dbReference type="GeneID" id="2541510"/>
<dbReference type="KEGG" id="spo:2541510"/>
<dbReference type="PomBase" id="SPAC22A12.02c">
    <property type="gene designation" value="mug103"/>
</dbReference>
<dbReference type="VEuPathDB" id="FungiDB:SPAC22A12.02c"/>
<dbReference type="HOGENOM" id="CLU_2039414_0_0_1"/>
<dbReference type="InParanoid" id="O13894"/>
<dbReference type="OMA" id="SICKAPP"/>
<dbReference type="PRO" id="PR:O13894"/>
<dbReference type="Proteomes" id="UP000002485">
    <property type="component" value="Chromosome I"/>
</dbReference>
<dbReference type="GO" id="GO:0005730">
    <property type="term" value="C:nucleolus"/>
    <property type="evidence" value="ECO:0007005"/>
    <property type="project" value="PomBase"/>
</dbReference>
<dbReference type="GO" id="GO:0051321">
    <property type="term" value="P:meiotic cell cycle"/>
    <property type="evidence" value="ECO:0007669"/>
    <property type="project" value="UniProtKB-KW"/>
</dbReference>
<sequence length="124" mass="14736">MEQFEIIRESDADPYYFNKNLRLEECEIDGFTSIYKAPPPYSFVAGLSKNTSSNSFVIHKCLPPLQRNNTIRKRKRNPFLADRPYCINSEDMPLSDDRDMLKERHVKSRKLLLKEKGNRFYRRS</sequence>
<accession>O13894</accession>
<evidence type="ECO:0000269" key="1">
    <source>
    </source>
</evidence>
<evidence type="ECO:0000269" key="2">
    <source>
    </source>
</evidence>
<name>MU103_SCHPO</name>
<feature type="chain" id="PRO_0000116733" description="Meiotically up-regulated gene 103 protein">
    <location>
        <begin position="1"/>
        <end position="124"/>
    </location>
</feature>